<protein>
    <recommendedName>
        <fullName>Uncharacterized protein PB1A10.05</fullName>
    </recommendedName>
</protein>
<gene>
    <name type="ORF">SPAPB1A10.05</name>
</gene>
<organism>
    <name type="scientific">Schizosaccharomyces pombe (strain 972 / ATCC 24843)</name>
    <name type="common">Fission yeast</name>
    <dbReference type="NCBI Taxonomy" id="284812"/>
    <lineage>
        <taxon>Eukaryota</taxon>
        <taxon>Fungi</taxon>
        <taxon>Dikarya</taxon>
        <taxon>Ascomycota</taxon>
        <taxon>Taphrinomycotina</taxon>
        <taxon>Schizosaccharomycetes</taxon>
        <taxon>Schizosaccharomycetales</taxon>
        <taxon>Schizosaccharomycetaceae</taxon>
        <taxon>Schizosaccharomyces</taxon>
    </lineage>
</organism>
<reference key="1">
    <citation type="journal article" date="2002" name="Nature">
        <title>The genome sequence of Schizosaccharomyces pombe.</title>
        <authorList>
            <person name="Wood V."/>
            <person name="Gwilliam R."/>
            <person name="Rajandream M.A."/>
            <person name="Lyne M.H."/>
            <person name="Lyne R."/>
            <person name="Stewart A."/>
            <person name="Sgouros J.G."/>
            <person name="Peat N."/>
            <person name="Hayles J."/>
            <person name="Baker S.G."/>
            <person name="Basham D."/>
            <person name="Bowman S."/>
            <person name="Brooks K."/>
            <person name="Brown D."/>
            <person name="Brown S."/>
            <person name="Chillingworth T."/>
            <person name="Churcher C.M."/>
            <person name="Collins M."/>
            <person name="Connor R."/>
            <person name="Cronin A."/>
            <person name="Davis P."/>
            <person name="Feltwell T."/>
            <person name="Fraser A."/>
            <person name="Gentles S."/>
            <person name="Goble A."/>
            <person name="Hamlin N."/>
            <person name="Harris D.E."/>
            <person name="Hidalgo J."/>
            <person name="Hodgson G."/>
            <person name="Holroyd S."/>
            <person name="Hornsby T."/>
            <person name="Howarth S."/>
            <person name="Huckle E.J."/>
            <person name="Hunt S."/>
            <person name="Jagels K."/>
            <person name="James K.D."/>
            <person name="Jones L."/>
            <person name="Jones M."/>
            <person name="Leather S."/>
            <person name="McDonald S."/>
            <person name="McLean J."/>
            <person name="Mooney P."/>
            <person name="Moule S."/>
            <person name="Mungall K.L."/>
            <person name="Murphy L.D."/>
            <person name="Niblett D."/>
            <person name="Odell C."/>
            <person name="Oliver K."/>
            <person name="O'Neil S."/>
            <person name="Pearson D."/>
            <person name="Quail M.A."/>
            <person name="Rabbinowitsch E."/>
            <person name="Rutherford K.M."/>
            <person name="Rutter S."/>
            <person name="Saunders D."/>
            <person name="Seeger K."/>
            <person name="Sharp S."/>
            <person name="Skelton J."/>
            <person name="Simmonds M.N."/>
            <person name="Squares R."/>
            <person name="Squares S."/>
            <person name="Stevens K."/>
            <person name="Taylor K."/>
            <person name="Taylor R.G."/>
            <person name="Tivey A."/>
            <person name="Walsh S.V."/>
            <person name="Warren T."/>
            <person name="Whitehead S."/>
            <person name="Woodward J.R."/>
            <person name="Volckaert G."/>
            <person name="Aert R."/>
            <person name="Robben J."/>
            <person name="Grymonprez B."/>
            <person name="Weltjens I."/>
            <person name="Vanstreels E."/>
            <person name="Rieger M."/>
            <person name="Schaefer M."/>
            <person name="Mueller-Auer S."/>
            <person name="Gabel C."/>
            <person name="Fuchs M."/>
            <person name="Duesterhoeft A."/>
            <person name="Fritzc C."/>
            <person name="Holzer E."/>
            <person name="Moestl D."/>
            <person name="Hilbert H."/>
            <person name="Borzym K."/>
            <person name="Langer I."/>
            <person name="Beck A."/>
            <person name="Lehrach H."/>
            <person name="Reinhardt R."/>
            <person name="Pohl T.M."/>
            <person name="Eger P."/>
            <person name="Zimmermann W."/>
            <person name="Wedler H."/>
            <person name="Wambutt R."/>
            <person name="Purnelle B."/>
            <person name="Goffeau A."/>
            <person name="Cadieu E."/>
            <person name="Dreano S."/>
            <person name="Gloux S."/>
            <person name="Lelaure V."/>
            <person name="Mottier S."/>
            <person name="Galibert F."/>
            <person name="Aves S.J."/>
            <person name="Xiang Z."/>
            <person name="Hunt C."/>
            <person name="Moore K."/>
            <person name="Hurst S.M."/>
            <person name="Lucas M."/>
            <person name="Rochet M."/>
            <person name="Gaillardin C."/>
            <person name="Tallada V.A."/>
            <person name="Garzon A."/>
            <person name="Thode G."/>
            <person name="Daga R.R."/>
            <person name="Cruzado L."/>
            <person name="Jimenez J."/>
            <person name="Sanchez M."/>
            <person name="del Rey F."/>
            <person name="Benito J."/>
            <person name="Dominguez A."/>
            <person name="Revuelta J.L."/>
            <person name="Moreno S."/>
            <person name="Armstrong J."/>
            <person name="Forsburg S.L."/>
            <person name="Cerutti L."/>
            <person name="Lowe T."/>
            <person name="McCombie W.R."/>
            <person name="Paulsen I."/>
            <person name="Potashkin J."/>
            <person name="Shpakovski G.V."/>
            <person name="Ussery D."/>
            <person name="Barrell B.G."/>
            <person name="Nurse P."/>
        </authorList>
    </citation>
    <scope>NUCLEOTIDE SEQUENCE [LARGE SCALE GENOMIC DNA]</scope>
    <source>
        <strain>972 / ATCC 24843</strain>
    </source>
</reference>
<reference key="2">
    <citation type="journal article" date="2011" name="Science">
        <title>Comparative functional genomics of the fission yeasts.</title>
        <authorList>
            <person name="Rhind N."/>
            <person name="Chen Z."/>
            <person name="Yassour M."/>
            <person name="Thompson D.A."/>
            <person name="Haas B.J."/>
            <person name="Habib N."/>
            <person name="Wapinski I."/>
            <person name="Roy S."/>
            <person name="Lin M.F."/>
            <person name="Heiman D.I."/>
            <person name="Young S.K."/>
            <person name="Furuya K."/>
            <person name="Guo Y."/>
            <person name="Pidoux A."/>
            <person name="Chen H.M."/>
            <person name="Robbertse B."/>
            <person name="Goldberg J.M."/>
            <person name="Aoki K."/>
            <person name="Bayne E.H."/>
            <person name="Berlin A.M."/>
            <person name="Desjardins C.A."/>
            <person name="Dobbs E."/>
            <person name="Dukaj L."/>
            <person name="Fan L."/>
            <person name="FitzGerald M.G."/>
            <person name="French C."/>
            <person name="Gujja S."/>
            <person name="Hansen K."/>
            <person name="Keifenheim D."/>
            <person name="Levin J.Z."/>
            <person name="Mosher R.A."/>
            <person name="Mueller C.A."/>
            <person name="Pfiffner J."/>
            <person name="Priest M."/>
            <person name="Russ C."/>
            <person name="Smialowska A."/>
            <person name="Swoboda P."/>
            <person name="Sykes S.M."/>
            <person name="Vaughn M."/>
            <person name="Vengrova S."/>
            <person name="Yoder R."/>
            <person name="Zeng Q."/>
            <person name="Allshire R."/>
            <person name="Baulcombe D."/>
            <person name="Birren B.W."/>
            <person name="Brown W."/>
            <person name="Ekwall K."/>
            <person name="Kellis M."/>
            <person name="Leatherwood J."/>
            <person name="Levin H."/>
            <person name="Margalit H."/>
            <person name="Martienssen R."/>
            <person name="Nieduszynski C.A."/>
            <person name="Spatafora J.W."/>
            <person name="Friedman N."/>
            <person name="Dalgaard J.Z."/>
            <person name="Baumann P."/>
            <person name="Niki H."/>
            <person name="Regev A."/>
            <person name="Nusbaum C."/>
        </authorList>
    </citation>
    <scope>REVISION OF GENE MODEL</scope>
</reference>
<reference key="3">
    <citation type="journal article" date="2006" name="Nat. Biotechnol.">
        <title>ORFeome cloning and global analysis of protein localization in the fission yeast Schizosaccharomyces pombe.</title>
        <authorList>
            <person name="Matsuyama A."/>
            <person name="Arai R."/>
            <person name="Yashiroda Y."/>
            <person name="Shirai A."/>
            <person name="Kamata A."/>
            <person name="Sekido S."/>
            <person name="Kobayashi Y."/>
            <person name="Hashimoto A."/>
            <person name="Hamamoto M."/>
            <person name="Hiraoka Y."/>
            <person name="Horinouchi S."/>
            <person name="Yoshida M."/>
        </authorList>
    </citation>
    <scope>SUBCELLULAR LOCATION [LARGE SCALE ANALYSIS]</scope>
</reference>
<feature type="chain" id="PRO_0000304105" description="Uncharacterized protein PB1A10.05">
    <location>
        <begin position="1"/>
        <end position="294"/>
    </location>
</feature>
<feature type="region of interest" description="Disordered" evidence="1">
    <location>
        <begin position="1"/>
        <end position="30"/>
    </location>
</feature>
<feature type="region of interest" description="Disordered" evidence="1">
    <location>
        <begin position="51"/>
        <end position="86"/>
    </location>
</feature>
<feature type="region of interest" description="Disordered" evidence="1">
    <location>
        <begin position="250"/>
        <end position="294"/>
    </location>
</feature>
<feature type="compositionally biased region" description="Polar residues" evidence="1">
    <location>
        <begin position="7"/>
        <end position="26"/>
    </location>
</feature>
<feature type="compositionally biased region" description="Polar residues" evidence="1">
    <location>
        <begin position="66"/>
        <end position="81"/>
    </location>
</feature>
<feature type="compositionally biased region" description="Polar residues" evidence="1">
    <location>
        <begin position="255"/>
        <end position="277"/>
    </location>
</feature>
<proteinExistence type="predicted"/>
<accession>Q9HDY5</accession>
<comment type="subcellular location">
    <subcellularLocation>
        <location evidence="2">Nucleus</location>
    </subcellularLocation>
</comment>
<keyword id="KW-0539">Nucleus</keyword>
<keyword id="KW-1185">Reference proteome</keyword>
<name>YK15_SCHPO</name>
<sequence length="294" mass="33066">MKRQRPQDSMISVPLQNENSTTTPTKEVSHLNFPLKRPRLHSFVPTSKQAALSDITPDTPPAFKTPYSSLPYNLVPQNSSTSKKRPRAEDLLVIEPSQNSLVPSTQNNEWNEIARKRVSLESDHPDKSGQVIDLATGQILDKQTEDIDDDRNKSAVSKSLVRHPHRLKMLPFGIQSAHPYISSLNSNYPTTWHFASHYYPTDSKQLVKYHPTEVHPSWTVEEPVHYNTYDGVVNEPNSSVIIEELDDDYDELNDPMNNNDTPITNSTHSAQMSNLPTHDSMDIDMGGAVPSTST</sequence>
<evidence type="ECO:0000256" key="1">
    <source>
        <dbReference type="SAM" id="MobiDB-lite"/>
    </source>
</evidence>
<evidence type="ECO:0000269" key="2">
    <source>
    </source>
</evidence>
<dbReference type="EMBL" id="CU329670">
    <property type="protein sequence ID" value="CAC21478.2"/>
    <property type="molecule type" value="Genomic_DNA"/>
</dbReference>
<dbReference type="RefSeq" id="NP_593519.2">
    <property type="nucleotide sequence ID" value="NM_001018953.2"/>
</dbReference>
<dbReference type="BioGRID" id="280015">
    <property type="interactions" value="8"/>
</dbReference>
<dbReference type="STRING" id="284812.Q9HDY5"/>
<dbReference type="iPTMnet" id="Q9HDY5"/>
<dbReference type="PaxDb" id="4896-SPAPB1A10.05.1"/>
<dbReference type="EnsemblFungi" id="SPAPB1A10.05.1">
    <property type="protein sequence ID" value="SPAPB1A10.05.1:pep"/>
    <property type="gene ID" value="SPAPB1A10.05"/>
</dbReference>
<dbReference type="KEGG" id="spo:2543600"/>
<dbReference type="PomBase" id="SPAPB1A10.05"/>
<dbReference type="VEuPathDB" id="FungiDB:SPAPB1A10.05"/>
<dbReference type="HOGENOM" id="CLU_947167_0_0_1"/>
<dbReference type="InParanoid" id="Q9HDY5"/>
<dbReference type="PRO" id="PR:Q9HDY5"/>
<dbReference type="Proteomes" id="UP000002485">
    <property type="component" value="Chromosome I"/>
</dbReference>
<dbReference type="GO" id="GO:0005634">
    <property type="term" value="C:nucleus"/>
    <property type="evidence" value="ECO:0007005"/>
    <property type="project" value="PomBase"/>
</dbReference>